<feature type="chain" id="PRO_0000210318" description="Mannosyl-oligosaccharide 1,2-alpha-mannosidase">
    <location>
        <begin position="1"/>
        <end position="565"/>
    </location>
</feature>
<feature type="region of interest" description="Disordered" evidence="5">
    <location>
        <begin position="526"/>
        <end position="565"/>
    </location>
</feature>
<feature type="compositionally biased region" description="Basic and acidic residues" evidence="5">
    <location>
        <begin position="526"/>
        <end position="538"/>
    </location>
</feature>
<feature type="compositionally biased region" description="Basic and acidic residues" evidence="5">
    <location>
        <begin position="550"/>
        <end position="565"/>
    </location>
</feature>
<feature type="active site" description="Proton donor" evidence="2">
    <location>
        <position position="378"/>
    </location>
</feature>
<feature type="binding site" evidence="3">
    <location>
        <position position="501"/>
    </location>
    <ligand>
        <name>Ca(2+)</name>
        <dbReference type="ChEBI" id="CHEBI:29108"/>
    </ligand>
</feature>
<feature type="disulfide bond" evidence="3">
    <location>
        <begin position="320"/>
        <end position="363"/>
    </location>
</feature>
<keyword id="KW-0106">Calcium</keyword>
<keyword id="KW-1015">Disulfide bond</keyword>
<keyword id="KW-0326">Glycosidase</keyword>
<keyword id="KW-0378">Hydrolase</keyword>
<keyword id="KW-0479">Metal-binding</keyword>
<protein>
    <recommendedName>
        <fullName>Mannosyl-oligosaccharide 1,2-alpha-mannosidase</fullName>
        <ecNumber evidence="3">3.2.1.113</ecNumber>
    </recommendedName>
    <alternativeName>
        <fullName>Man(9)-alpha-mannosidase</fullName>
    </alternativeName>
</protein>
<dbReference type="EC" id="3.2.1.113" evidence="3"/>
<dbReference type="EMBL" id="AY167027">
    <property type="protein sequence ID" value="AAN86059.2"/>
    <property type="molecule type" value="Genomic_DNA"/>
</dbReference>
<dbReference type="SMR" id="Q8J0Q0"/>
<dbReference type="CAZy" id="GH47">
    <property type="family name" value="Glycoside Hydrolase Family 47"/>
</dbReference>
<dbReference type="VEuPathDB" id="FungiDB:C1_03730C_A"/>
<dbReference type="VEuPathDB" id="FungiDB:CAWG_01018"/>
<dbReference type="BRENDA" id="3.2.1.113">
    <property type="organism ID" value="1096"/>
</dbReference>
<dbReference type="BRENDA" id="3.2.1.209">
    <property type="organism ID" value="1096"/>
</dbReference>
<dbReference type="UniPathway" id="UPA00378"/>
<dbReference type="GO" id="GO:0005783">
    <property type="term" value="C:endoplasmic reticulum"/>
    <property type="evidence" value="ECO:0007669"/>
    <property type="project" value="TreeGrafter"/>
</dbReference>
<dbReference type="GO" id="GO:0016020">
    <property type="term" value="C:membrane"/>
    <property type="evidence" value="ECO:0007669"/>
    <property type="project" value="InterPro"/>
</dbReference>
<dbReference type="GO" id="GO:0005509">
    <property type="term" value="F:calcium ion binding"/>
    <property type="evidence" value="ECO:0007669"/>
    <property type="project" value="InterPro"/>
</dbReference>
<dbReference type="GO" id="GO:0004571">
    <property type="term" value="F:mannosyl-oligosaccharide 1,2-alpha-mannosidase activity"/>
    <property type="evidence" value="ECO:0007669"/>
    <property type="project" value="UniProtKB-EC"/>
</dbReference>
<dbReference type="GO" id="GO:0005975">
    <property type="term" value="P:carbohydrate metabolic process"/>
    <property type="evidence" value="ECO:0007669"/>
    <property type="project" value="InterPro"/>
</dbReference>
<dbReference type="GO" id="GO:0036503">
    <property type="term" value="P:ERAD pathway"/>
    <property type="evidence" value="ECO:0007669"/>
    <property type="project" value="UniProtKB-ARBA"/>
</dbReference>
<dbReference type="GO" id="GO:0006486">
    <property type="term" value="P:protein glycosylation"/>
    <property type="evidence" value="ECO:0007669"/>
    <property type="project" value="UniProtKB-UniPathway"/>
</dbReference>
<dbReference type="FunFam" id="1.50.10.10:FF:000082">
    <property type="entry name" value="alpha-1,2-Mannosidase"/>
    <property type="match status" value="1"/>
</dbReference>
<dbReference type="Gene3D" id="1.50.10.10">
    <property type="match status" value="1"/>
</dbReference>
<dbReference type="InterPro" id="IPR012341">
    <property type="entry name" value="6hp_glycosidase-like_sf"/>
</dbReference>
<dbReference type="InterPro" id="IPR001382">
    <property type="entry name" value="Glyco_hydro_47"/>
</dbReference>
<dbReference type="InterPro" id="IPR050749">
    <property type="entry name" value="Glycosyl_Hydrolase_47"/>
</dbReference>
<dbReference type="InterPro" id="IPR036026">
    <property type="entry name" value="Seven-hairpin_glycosidases"/>
</dbReference>
<dbReference type="PANTHER" id="PTHR11742:SF55">
    <property type="entry name" value="ENDOPLASMIC RETICULUM MANNOSYL-OLIGOSACCHARIDE 1,2-ALPHA-MANNOSIDASE"/>
    <property type="match status" value="1"/>
</dbReference>
<dbReference type="PANTHER" id="PTHR11742">
    <property type="entry name" value="MANNOSYL-OLIGOSACCHARIDE ALPHA-1,2-MANNOSIDASE-RELATED"/>
    <property type="match status" value="1"/>
</dbReference>
<dbReference type="Pfam" id="PF01532">
    <property type="entry name" value="Glyco_hydro_47"/>
    <property type="match status" value="1"/>
</dbReference>
<dbReference type="PRINTS" id="PR00747">
    <property type="entry name" value="GLYHDRLASE47"/>
</dbReference>
<dbReference type="SUPFAM" id="SSF48225">
    <property type="entry name" value="Seven-hairpin glycosidases"/>
    <property type="match status" value="1"/>
</dbReference>
<comment type="function">
    <text evidence="1">Involved in the maturation of Asn-linked oligosaccharides. Trim a single alpha-1,2-linked mannose residue from Man(9)GlcNAc(2) to produce Man(8)GlcNAc(2) (By similarity).</text>
</comment>
<comment type="catalytic activity">
    <reaction evidence="3">
        <text>N(4)-(alpha-D-Man-(1-&gt;2)-alpha-D-Man-(1-&gt;2)-alpha-D-Man-(1-&gt;3)-[alpha-D-Man-(1-&gt;2)-alpha-D-Man-(1-&gt;3)-[alpha-D-Man-(1-&gt;2)-alpha-D-Man-(1-&gt;6)]-alpha-D-Man-(1-&gt;6)]-beta-D-Man-(1-&gt;4)-beta-D-GlcNAc-(1-&gt;4)-beta-D-GlcNAc)-L-asparaginyl-[protein] (N-glucan mannose isomer 9A1,2,3B1,2,3) + 4 H2O = N(4)-(alpha-D-Man-(1-&gt;3)-[alpha-D-Man-(1-&gt;3)-[alpha-D-Man-(1-&gt;6)]-alpha-D-Man-(1-&gt;6)]-beta-D-Man-(1-&gt;4)-beta-D-GlcNAc-(1-&gt;4)-beta-D-GlcNAc)-L-asparaginyl-[protein] (N-glucan mannose isomer 5A1,2) + 4 beta-D-mannose</text>
        <dbReference type="Rhea" id="RHEA:56008"/>
        <dbReference type="Rhea" id="RHEA-COMP:14356"/>
        <dbReference type="Rhea" id="RHEA-COMP:14367"/>
        <dbReference type="ChEBI" id="CHEBI:15377"/>
        <dbReference type="ChEBI" id="CHEBI:28563"/>
        <dbReference type="ChEBI" id="CHEBI:59087"/>
        <dbReference type="ChEBI" id="CHEBI:139493"/>
        <dbReference type="EC" id="3.2.1.113"/>
    </reaction>
</comment>
<comment type="catalytic activity">
    <reaction evidence="3">
        <text>N(4)-(alpha-D-Man-(1-&gt;2)-alpha-D-Man-(1-&gt;2)-alpha-D-Man-(1-&gt;3)-[alpha-D-Man-(1-&gt;3)-[alpha-D-Man-(1-&gt;2)-alpha-D-Man-(1-&gt;6)]-alpha-D-Man-(1-&gt;6)]-beta-D-Man-(1-&gt;4)-beta-D-GlcNAc-(1-&gt;4)-beta-D-GlcNAc)-L-asparaginyl-[protein] (N-glucan mannose isomer 8A1,2,3B1,3) + 3 H2O = N(4)-(alpha-D-Man-(1-&gt;3)-[alpha-D-Man-(1-&gt;3)-[alpha-D-Man-(1-&gt;6)]-alpha-D-Man-(1-&gt;6)]-beta-D-Man-(1-&gt;4)-beta-D-GlcNAc-(1-&gt;4)-beta-D-GlcNAc)-L-asparaginyl-[protein] (N-glucan mannose isomer 5A1,2) + 3 beta-D-mannose</text>
        <dbReference type="Rhea" id="RHEA:56028"/>
        <dbReference type="Rhea" id="RHEA-COMP:14358"/>
        <dbReference type="Rhea" id="RHEA-COMP:14367"/>
        <dbReference type="ChEBI" id="CHEBI:15377"/>
        <dbReference type="ChEBI" id="CHEBI:28563"/>
        <dbReference type="ChEBI" id="CHEBI:59087"/>
        <dbReference type="ChEBI" id="CHEBI:60628"/>
        <dbReference type="EC" id="3.2.1.113"/>
    </reaction>
</comment>
<comment type="cofactor">
    <cofactor evidence="4">
        <name>Ca(2+)</name>
        <dbReference type="ChEBI" id="CHEBI:29108"/>
    </cofactor>
</comment>
<comment type="pathway">
    <text evidence="3">Protein modification; protein glycosylation.</text>
</comment>
<comment type="similarity">
    <text evidence="6">Belongs to the glycosyl hydrolase 47 family.</text>
</comment>
<organism>
    <name type="scientific">Candida albicans</name>
    <name type="common">Yeast</name>
    <dbReference type="NCBI Taxonomy" id="5476"/>
    <lineage>
        <taxon>Eukaryota</taxon>
        <taxon>Fungi</taxon>
        <taxon>Dikarya</taxon>
        <taxon>Ascomycota</taxon>
        <taxon>Saccharomycotina</taxon>
        <taxon>Pichiomycetes</taxon>
        <taxon>Debaryomycetaceae</taxon>
        <taxon>Candida/Lodderomyces clade</taxon>
        <taxon>Candida</taxon>
    </lineage>
</organism>
<proteinExistence type="inferred from homology"/>
<gene>
    <name type="primary">MNS1</name>
</gene>
<evidence type="ECO:0000250" key="1"/>
<evidence type="ECO:0000250" key="2">
    <source>
        <dbReference type="UniProtKB" id="P31723"/>
    </source>
</evidence>
<evidence type="ECO:0000250" key="3">
    <source>
        <dbReference type="UniProtKB" id="P32906"/>
    </source>
</evidence>
<evidence type="ECO:0000250" key="4">
    <source>
        <dbReference type="UniProtKB" id="P45700"/>
    </source>
</evidence>
<evidence type="ECO:0000256" key="5">
    <source>
        <dbReference type="SAM" id="MobiDB-lite"/>
    </source>
</evidence>
<evidence type="ECO:0000305" key="6"/>
<name>MNS1_CANAX</name>
<accession>Q8J0Q0</accession>
<reference key="1">
    <citation type="submission" date="2003-06" db="EMBL/GenBank/DDBJ databases">
        <title>Identification of the alpha1,2-mannosidase gene (Mns1) in Candida albicans.</title>
        <authorList>
            <person name="Mora-Montes H.M."/>
            <person name="Flores-Carreon A."/>
            <person name="Ponce-Noyola P."/>
            <person name="Lopez-Romero E."/>
            <person name="Zinker-Ruzal S."/>
        </authorList>
    </citation>
    <scope>NUCLEOTIDE SEQUENCE [GENOMIC DNA]</scope>
    <source>
        <strain>ATCC 26555</strain>
    </source>
</reference>
<sequence>MLLKGFMLSLVLYAVYHLASNGGQFMFDFSGQSKWERAQSEVRQAILDSWHTYEKYGWGYDVYHPIKQEGENMGPKPLGWMIVDSLDTLMIMDCPEEVSRARDWIKNDLDYTFDYNVNTFETTIRMLGGLLSAYHFSNDDVYLDKAVQLANALHGAYDSPSGIPYSSVNLKSGKGIKNHVDNGASSTAEAATVQLEMKYLSKLTGEILWWNLAEKVMQVLESNKPQDGLVPIYVNPDTGKYQGHLIRLGSRGDSYYEYLLKQYLQTNKQELVYWDMYRESVEGVKKHLVSDSYPSGLTFIGELDNGIGGKLSTKMDHLVCFYGGLLALGATGGLTLNEAQSLKSWNEEREADFKLGEELTYTCYKMYHDVSPTGLSPEIVVFNEDTSKSKDFIIKPLDRHNLQRPETVESLFYLYRLTGDVKYREMGYEIFQNFIKYTKVVNSEGEVSFSSLSDVTSFDSNGLPKFKDNTESFWWAETLKYLYLLFDDTNKIPLTDYVFNTEAHPFPRFDTNDYFKTGWRRKIDENEKAQMRESKVIDKSNLPEAQPVDKSADQEAKEIIEEIAG</sequence>